<protein>
    <recommendedName>
        <fullName evidence="1">UPF0346 protein BCQ_2236</fullName>
    </recommendedName>
</protein>
<proteinExistence type="inferred from homology"/>
<name>Y2236_BACCQ</name>
<evidence type="ECO:0000255" key="1">
    <source>
        <dbReference type="HAMAP-Rule" id="MF_01538"/>
    </source>
</evidence>
<dbReference type="EMBL" id="CP000227">
    <property type="protein sequence ID" value="ACM12664.1"/>
    <property type="molecule type" value="Genomic_DNA"/>
</dbReference>
<dbReference type="SMR" id="B9IZV2"/>
<dbReference type="KEGG" id="bcq:BCQ_2236"/>
<dbReference type="HOGENOM" id="CLU_177534_0_0_9"/>
<dbReference type="Proteomes" id="UP000000441">
    <property type="component" value="Chromosome"/>
</dbReference>
<dbReference type="Gene3D" id="1.10.150.260">
    <property type="entry name" value="YozE SAM-like"/>
    <property type="match status" value="1"/>
</dbReference>
<dbReference type="HAMAP" id="MF_01538">
    <property type="entry name" value="UPF0346"/>
    <property type="match status" value="1"/>
</dbReference>
<dbReference type="InterPro" id="IPR010673">
    <property type="entry name" value="UPF0346"/>
</dbReference>
<dbReference type="InterPro" id="IPR023089">
    <property type="entry name" value="YozE_SAM-like"/>
</dbReference>
<dbReference type="InterPro" id="IPR036806">
    <property type="entry name" value="YozE_SAM-like_sf"/>
</dbReference>
<dbReference type="NCBIfam" id="NF010193">
    <property type="entry name" value="PRK13672.1"/>
    <property type="match status" value="1"/>
</dbReference>
<dbReference type="Pfam" id="PF06855">
    <property type="entry name" value="YozE_SAM_like"/>
    <property type="match status" value="1"/>
</dbReference>
<dbReference type="PIRSF" id="PIRSF037262">
    <property type="entry name" value="UCP037262"/>
    <property type="match status" value="1"/>
</dbReference>
<dbReference type="SUPFAM" id="SSF140652">
    <property type="entry name" value="YozE-like"/>
    <property type="match status" value="1"/>
</dbReference>
<feature type="chain" id="PRO_1000185204" description="UPF0346 protein BCQ_2236">
    <location>
        <begin position="1"/>
        <end position="71"/>
    </location>
</feature>
<sequence>MKKTFYHYMMKHRAALFSNEISNLAEAMYDDLSFPKQSEDYDEISSYLELSGMLESMSIFDEAWDLYIQDR</sequence>
<organism>
    <name type="scientific">Bacillus cereus (strain Q1)</name>
    <dbReference type="NCBI Taxonomy" id="361100"/>
    <lineage>
        <taxon>Bacteria</taxon>
        <taxon>Bacillati</taxon>
        <taxon>Bacillota</taxon>
        <taxon>Bacilli</taxon>
        <taxon>Bacillales</taxon>
        <taxon>Bacillaceae</taxon>
        <taxon>Bacillus</taxon>
        <taxon>Bacillus cereus group</taxon>
    </lineage>
</organism>
<reference key="1">
    <citation type="journal article" date="2009" name="J. Bacteriol.">
        <title>Complete genome sequence of the extremophilic Bacillus cereus strain Q1 with industrial applications.</title>
        <authorList>
            <person name="Xiong Z."/>
            <person name="Jiang Y."/>
            <person name="Qi D."/>
            <person name="Lu H."/>
            <person name="Yang F."/>
            <person name="Yang J."/>
            <person name="Chen L."/>
            <person name="Sun L."/>
            <person name="Xu X."/>
            <person name="Xue Y."/>
            <person name="Zhu Y."/>
            <person name="Jin Q."/>
        </authorList>
    </citation>
    <scope>NUCLEOTIDE SEQUENCE [LARGE SCALE GENOMIC DNA]</scope>
    <source>
        <strain>Q1</strain>
    </source>
</reference>
<accession>B9IZV2</accession>
<gene>
    <name type="ordered locus">BCQ_2236</name>
</gene>
<comment type="similarity">
    <text evidence="1">Belongs to the UPF0346 family.</text>
</comment>